<accession>Q3YRY0</accession>
<keyword id="KW-0687">Ribonucleoprotein</keyword>
<keyword id="KW-0689">Ribosomal protein</keyword>
<keyword id="KW-0694">RNA-binding</keyword>
<keyword id="KW-0699">rRNA-binding</keyword>
<dbReference type="EMBL" id="CP000107">
    <property type="protein sequence ID" value="AAZ68525.1"/>
    <property type="molecule type" value="Genomic_DNA"/>
</dbReference>
<dbReference type="RefSeq" id="WP_011304603.1">
    <property type="nucleotide sequence ID" value="NC_007354.1"/>
</dbReference>
<dbReference type="SMR" id="Q3YRY0"/>
<dbReference type="FunCoup" id="Q3YRY0">
    <property type="interactions" value="335"/>
</dbReference>
<dbReference type="STRING" id="269484.Ecaj_0488"/>
<dbReference type="KEGG" id="ecn:Ecaj_0488"/>
<dbReference type="eggNOG" id="COG0261">
    <property type="taxonomic scope" value="Bacteria"/>
</dbReference>
<dbReference type="HOGENOM" id="CLU_061463_3_2_5"/>
<dbReference type="InParanoid" id="Q3YRY0"/>
<dbReference type="Proteomes" id="UP000000435">
    <property type="component" value="Chromosome"/>
</dbReference>
<dbReference type="GO" id="GO:0005737">
    <property type="term" value="C:cytoplasm"/>
    <property type="evidence" value="ECO:0007669"/>
    <property type="project" value="UniProtKB-ARBA"/>
</dbReference>
<dbReference type="GO" id="GO:1990904">
    <property type="term" value="C:ribonucleoprotein complex"/>
    <property type="evidence" value="ECO:0007669"/>
    <property type="project" value="UniProtKB-KW"/>
</dbReference>
<dbReference type="GO" id="GO:0005840">
    <property type="term" value="C:ribosome"/>
    <property type="evidence" value="ECO:0007669"/>
    <property type="project" value="UniProtKB-KW"/>
</dbReference>
<dbReference type="GO" id="GO:0019843">
    <property type="term" value="F:rRNA binding"/>
    <property type="evidence" value="ECO:0007669"/>
    <property type="project" value="UniProtKB-UniRule"/>
</dbReference>
<dbReference type="GO" id="GO:0003735">
    <property type="term" value="F:structural constituent of ribosome"/>
    <property type="evidence" value="ECO:0007669"/>
    <property type="project" value="InterPro"/>
</dbReference>
<dbReference type="GO" id="GO:0006412">
    <property type="term" value="P:translation"/>
    <property type="evidence" value="ECO:0007669"/>
    <property type="project" value="UniProtKB-UniRule"/>
</dbReference>
<dbReference type="HAMAP" id="MF_01363">
    <property type="entry name" value="Ribosomal_bL21"/>
    <property type="match status" value="1"/>
</dbReference>
<dbReference type="InterPro" id="IPR028909">
    <property type="entry name" value="bL21-like"/>
</dbReference>
<dbReference type="InterPro" id="IPR036164">
    <property type="entry name" value="bL21-like_sf"/>
</dbReference>
<dbReference type="InterPro" id="IPR001787">
    <property type="entry name" value="Ribosomal_bL21"/>
</dbReference>
<dbReference type="InterPro" id="IPR018258">
    <property type="entry name" value="Ribosomal_bL21_CS"/>
</dbReference>
<dbReference type="NCBIfam" id="TIGR00061">
    <property type="entry name" value="L21"/>
    <property type="match status" value="1"/>
</dbReference>
<dbReference type="PANTHER" id="PTHR21349">
    <property type="entry name" value="50S RIBOSOMAL PROTEIN L21"/>
    <property type="match status" value="1"/>
</dbReference>
<dbReference type="PANTHER" id="PTHR21349:SF0">
    <property type="entry name" value="LARGE RIBOSOMAL SUBUNIT PROTEIN BL21M"/>
    <property type="match status" value="1"/>
</dbReference>
<dbReference type="Pfam" id="PF00829">
    <property type="entry name" value="Ribosomal_L21p"/>
    <property type="match status" value="1"/>
</dbReference>
<dbReference type="SUPFAM" id="SSF141091">
    <property type="entry name" value="L21p-like"/>
    <property type="match status" value="1"/>
</dbReference>
<dbReference type="PROSITE" id="PS01169">
    <property type="entry name" value="RIBOSOMAL_L21"/>
    <property type="match status" value="1"/>
</dbReference>
<evidence type="ECO:0000255" key="1">
    <source>
        <dbReference type="HAMAP-Rule" id="MF_01363"/>
    </source>
</evidence>
<evidence type="ECO:0000305" key="2"/>
<protein>
    <recommendedName>
        <fullName evidence="1">Large ribosomal subunit protein bL21</fullName>
    </recommendedName>
    <alternativeName>
        <fullName evidence="2">50S ribosomal protein L21</fullName>
    </alternativeName>
</protein>
<reference key="1">
    <citation type="journal article" date="2006" name="J. Bacteriol.">
        <title>The genome of the obligately intracellular bacterium Ehrlichia canis reveals themes of complex membrane structure and immune evasion strategies.</title>
        <authorList>
            <person name="Mavromatis K."/>
            <person name="Doyle C.K."/>
            <person name="Lykidis A."/>
            <person name="Ivanova N."/>
            <person name="Francino M.P."/>
            <person name="Chain P."/>
            <person name="Shin M."/>
            <person name="Malfatti S."/>
            <person name="Larimer F."/>
            <person name="Copeland A."/>
            <person name="Detter J.C."/>
            <person name="Land M."/>
            <person name="Richardson P.M."/>
            <person name="Yu X.J."/>
            <person name="Walker D.H."/>
            <person name="McBride J.W."/>
            <person name="Kyrpides N.C."/>
        </authorList>
    </citation>
    <scope>NUCLEOTIDE SEQUENCE [LARGE SCALE GENOMIC DNA]</scope>
    <source>
        <strain>Jake</strain>
    </source>
</reference>
<feature type="chain" id="PRO_0000270662" description="Large ribosomal subunit protein bL21">
    <location>
        <begin position="1"/>
        <end position="102"/>
    </location>
</feature>
<gene>
    <name evidence="1" type="primary">rplU</name>
    <name type="ordered locus">Ecaj_0488</name>
</gene>
<sequence length="102" mass="11786">MFAVVETGGKQYKVKEQDVIRIEKLNASVGEEVTLSNVIALTDVNNNIVFTQSATVTASVLEQCRNDKIIIFKKKRRKNYRRKNGHRQYMTVLRVIKINNME</sequence>
<name>RL21_EHRCJ</name>
<organism>
    <name type="scientific">Ehrlichia canis (strain Jake)</name>
    <dbReference type="NCBI Taxonomy" id="269484"/>
    <lineage>
        <taxon>Bacteria</taxon>
        <taxon>Pseudomonadati</taxon>
        <taxon>Pseudomonadota</taxon>
        <taxon>Alphaproteobacteria</taxon>
        <taxon>Rickettsiales</taxon>
        <taxon>Anaplasmataceae</taxon>
        <taxon>Ehrlichia</taxon>
    </lineage>
</organism>
<comment type="function">
    <text evidence="1">This protein binds to 23S rRNA in the presence of protein L20.</text>
</comment>
<comment type="subunit">
    <text evidence="1">Part of the 50S ribosomal subunit. Contacts protein L20.</text>
</comment>
<comment type="similarity">
    <text evidence="1">Belongs to the bacterial ribosomal protein bL21 family.</text>
</comment>
<proteinExistence type="inferred from homology"/>